<keyword id="KW-0963">Cytoplasm</keyword>
<keyword id="KW-0444">Lipid biosynthesis</keyword>
<keyword id="KW-0443">Lipid metabolism</keyword>
<keyword id="KW-0594">Phospholipid biosynthesis</keyword>
<keyword id="KW-1208">Phospholipid metabolism</keyword>
<keyword id="KW-1185">Reference proteome</keyword>
<keyword id="KW-0808">Transferase</keyword>
<protein>
    <recommendedName>
        <fullName evidence="1">Phosphate acyltransferase</fullName>
        <ecNumber evidence="1">2.3.1.274</ecNumber>
    </recommendedName>
    <alternativeName>
        <fullName evidence="1">Acyl-ACP phosphotransacylase</fullName>
    </alternativeName>
    <alternativeName>
        <fullName evidence="1">Acyl-[acyl-carrier-protein]--phosphate acyltransferase</fullName>
    </alternativeName>
    <alternativeName>
        <fullName evidence="1">Phosphate-acyl-ACP acyltransferase</fullName>
    </alternativeName>
</protein>
<name>PLSX_PHOLL</name>
<feature type="chain" id="PRO_0000189917" description="Phosphate acyltransferase">
    <location>
        <begin position="1"/>
        <end position="345"/>
    </location>
</feature>
<proteinExistence type="inferred from homology"/>
<comment type="function">
    <text evidence="1">Catalyzes the reversible formation of acyl-phosphate (acyl-PO(4)) from acyl-[acyl-carrier-protein] (acyl-ACP). This enzyme utilizes acyl-ACP as fatty acyl donor, but not acyl-CoA.</text>
</comment>
<comment type="catalytic activity">
    <reaction evidence="1">
        <text>a fatty acyl-[ACP] + phosphate = an acyl phosphate + holo-[ACP]</text>
        <dbReference type="Rhea" id="RHEA:42292"/>
        <dbReference type="Rhea" id="RHEA-COMP:9685"/>
        <dbReference type="Rhea" id="RHEA-COMP:14125"/>
        <dbReference type="ChEBI" id="CHEBI:43474"/>
        <dbReference type="ChEBI" id="CHEBI:59918"/>
        <dbReference type="ChEBI" id="CHEBI:64479"/>
        <dbReference type="ChEBI" id="CHEBI:138651"/>
        <dbReference type="EC" id="2.3.1.274"/>
    </reaction>
</comment>
<comment type="pathway">
    <text evidence="1">Lipid metabolism; phospholipid metabolism.</text>
</comment>
<comment type="subunit">
    <text evidence="1">Homodimer. Probably interacts with PlsY.</text>
</comment>
<comment type="subcellular location">
    <subcellularLocation>
        <location evidence="1">Cytoplasm</location>
    </subcellularLocation>
    <text evidence="1">Associated with the membrane possibly through PlsY.</text>
</comment>
<comment type="similarity">
    <text evidence="1">Belongs to the PlsX family.</text>
</comment>
<gene>
    <name evidence="1" type="primary">plsX</name>
    <name type="ordered locus">plu2836</name>
</gene>
<accession>Q7N383</accession>
<sequence length="345" mass="37173">MTNLTLALDAMSGDFGPRVTVPAALQALASNPRLKLLLVGIPDIISPMLVNSDTELLSRLQLVPAERVVANDAKPSQAIRNSRGTSMRIALDLVKSGEAQACISAGNTGVLMGLSKLMLKSIEGIERPALMTVLPNLKQRQTVVLDLGANVNCDSRMLVQFAIMGSVMAEEVVGVVNPAVALLNIGTEESKGLDNIREAATILKRIPTINYIGYLEGDELLTGKSDVLVCDGFAGNVTLKTMEGAIRVILSLLKSSDGQKKKFSWLLRIVKKWLQKRMTKRFGHLNPDQYNGACLLGLYGIVIKSHGAANEHAFKAAIEQAVQAVERQVPDRIAARLETALPKSD</sequence>
<organism>
    <name type="scientific">Photorhabdus laumondii subsp. laumondii (strain DSM 15139 / CIP 105565 / TT01)</name>
    <name type="common">Photorhabdus luminescens subsp. laumondii</name>
    <dbReference type="NCBI Taxonomy" id="243265"/>
    <lineage>
        <taxon>Bacteria</taxon>
        <taxon>Pseudomonadati</taxon>
        <taxon>Pseudomonadota</taxon>
        <taxon>Gammaproteobacteria</taxon>
        <taxon>Enterobacterales</taxon>
        <taxon>Morganellaceae</taxon>
        <taxon>Photorhabdus</taxon>
    </lineage>
</organism>
<reference key="1">
    <citation type="journal article" date="2003" name="Nat. Biotechnol.">
        <title>The genome sequence of the entomopathogenic bacterium Photorhabdus luminescens.</title>
        <authorList>
            <person name="Duchaud E."/>
            <person name="Rusniok C."/>
            <person name="Frangeul L."/>
            <person name="Buchrieser C."/>
            <person name="Givaudan A."/>
            <person name="Taourit S."/>
            <person name="Bocs S."/>
            <person name="Boursaux-Eude C."/>
            <person name="Chandler M."/>
            <person name="Charles J.-F."/>
            <person name="Dassa E."/>
            <person name="Derose R."/>
            <person name="Derzelle S."/>
            <person name="Freyssinet G."/>
            <person name="Gaudriault S."/>
            <person name="Medigue C."/>
            <person name="Lanois A."/>
            <person name="Powell K."/>
            <person name="Siguier P."/>
            <person name="Vincent R."/>
            <person name="Wingate V."/>
            <person name="Zouine M."/>
            <person name="Glaser P."/>
            <person name="Boemare N."/>
            <person name="Danchin A."/>
            <person name="Kunst F."/>
        </authorList>
    </citation>
    <scope>NUCLEOTIDE SEQUENCE [LARGE SCALE GENOMIC DNA]</scope>
    <source>
        <strain>DSM 15139 / CIP 105565 / TT01</strain>
    </source>
</reference>
<dbReference type="EC" id="2.3.1.274" evidence="1"/>
<dbReference type="EMBL" id="BX571868">
    <property type="protein sequence ID" value="CAE15210.1"/>
    <property type="molecule type" value="Genomic_DNA"/>
</dbReference>
<dbReference type="RefSeq" id="WP_011147056.1">
    <property type="nucleotide sequence ID" value="NC_005126.1"/>
</dbReference>
<dbReference type="SMR" id="Q7N383"/>
<dbReference type="STRING" id="243265.plu2836"/>
<dbReference type="GeneID" id="48849098"/>
<dbReference type="KEGG" id="plu:plu2836"/>
<dbReference type="eggNOG" id="COG0416">
    <property type="taxonomic scope" value="Bacteria"/>
</dbReference>
<dbReference type="HOGENOM" id="CLU_039379_1_0_6"/>
<dbReference type="OrthoDB" id="9806408at2"/>
<dbReference type="UniPathway" id="UPA00085"/>
<dbReference type="Proteomes" id="UP000002514">
    <property type="component" value="Chromosome"/>
</dbReference>
<dbReference type="GO" id="GO:0005737">
    <property type="term" value="C:cytoplasm"/>
    <property type="evidence" value="ECO:0007669"/>
    <property type="project" value="UniProtKB-SubCell"/>
</dbReference>
<dbReference type="GO" id="GO:0043811">
    <property type="term" value="F:phosphate:acyl-[acyl carrier protein] acyltransferase activity"/>
    <property type="evidence" value="ECO:0007669"/>
    <property type="project" value="UniProtKB-UniRule"/>
</dbReference>
<dbReference type="GO" id="GO:0006633">
    <property type="term" value="P:fatty acid biosynthetic process"/>
    <property type="evidence" value="ECO:0007669"/>
    <property type="project" value="UniProtKB-UniRule"/>
</dbReference>
<dbReference type="GO" id="GO:0008654">
    <property type="term" value="P:phospholipid biosynthetic process"/>
    <property type="evidence" value="ECO:0007669"/>
    <property type="project" value="UniProtKB-KW"/>
</dbReference>
<dbReference type="FunFam" id="3.40.718.10:FF:000008">
    <property type="entry name" value="Phosphate acyltransferase"/>
    <property type="match status" value="1"/>
</dbReference>
<dbReference type="Gene3D" id="3.40.718.10">
    <property type="entry name" value="Isopropylmalate Dehydrogenase"/>
    <property type="match status" value="1"/>
</dbReference>
<dbReference type="HAMAP" id="MF_00019">
    <property type="entry name" value="PlsX"/>
    <property type="match status" value="1"/>
</dbReference>
<dbReference type="InterPro" id="IPR003664">
    <property type="entry name" value="FA_synthesis"/>
</dbReference>
<dbReference type="InterPro" id="IPR012281">
    <property type="entry name" value="Phospholipid_synth_PlsX-like"/>
</dbReference>
<dbReference type="NCBIfam" id="TIGR00182">
    <property type="entry name" value="plsX"/>
    <property type="match status" value="1"/>
</dbReference>
<dbReference type="PANTHER" id="PTHR30100">
    <property type="entry name" value="FATTY ACID/PHOSPHOLIPID SYNTHESIS PROTEIN PLSX"/>
    <property type="match status" value="1"/>
</dbReference>
<dbReference type="PANTHER" id="PTHR30100:SF1">
    <property type="entry name" value="PHOSPHATE ACYLTRANSFERASE"/>
    <property type="match status" value="1"/>
</dbReference>
<dbReference type="Pfam" id="PF02504">
    <property type="entry name" value="FA_synthesis"/>
    <property type="match status" value="1"/>
</dbReference>
<dbReference type="PIRSF" id="PIRSF002465">
    <property type="entry name" value="Phsphlp_syn_PlsX"/>
    <property type="match status" value="1"/>
</dbReference>
<dbReference type="SUPFAM" id="SSF53659">
    <property type="entry name" value="Isocitrate/Isopropylmalate dehydrogenase-like"/>
    <property type="match status" value="1"/>
</dbReference>
<evidence type="ECO:0000255" key="1">
    <source>
        <dbReference type="HAMAP-Rule" id="MF_00019"/>
    </source>
</evidence>